<keyword id="KW-0066">ATP synthesis</keyword>
<keyword id="KW-0067">ATP-binding</keyword>
<keyword id="KW-1003">Cell membrane</keyword>
<keyword id="KW-0139">CF(1)</keyword>
<keyword id="KW-0375">Hydrogen ion transport</keyword>
<keyword id="KW-0406">Ion transport</keyword>
<keyword id="KW-0472">Membrane</keyword>
<keyword id="KW-0547">Nucleotide-binding</keyword>
<keyword id="KW-1278">Translocase</keyword>
<keyword id="KW-0813">Transport</keyword>
<feature type="chain" id="PRO_0000339034" description="ATP synthase subunit alpha">
    <location>
        <begin position="1"/>
        <end position="506"/>
    </location>
</feature>
<feature type="binding site" evidence="1">
    <location>
        <begin position="172"/>
        <end position="179"/>
    </location>
    <ligand>
        <name>ATP</name>
        <dbReference type="ChEBI" id="CHEBI:30616"/>
    </ligand>
</feature>
<feature type="site" description="Required for activity" evidence="1">
    <location>
        <position position="365"/>
    </location>
</feature>
<dbReference type="EC" id="7.1.2.2" evidence="1"/>
<dbReference type="EMBL" id="CP000413">
    <property type="protein sequence ID" value="ABJ60609.1"/>
    <property type="molecule type" value="Genomic_DNA"/>
</dbReference>
<dbReference type="SMR" id="Q042L3"/>
<dbReference type="KEGG" id="lga:LGAS_1240"/>
<dbReference type="HOGENOM" id="CLU_010091_2_1_9"/>
<dbReference type="BioCyc" id="LGAS324831:G1G6Y-1236-MONOMER"/>
<dbReference type="Proteomes" id="UP000000664">
    <property type="component" value="Chromosome"/>
</dbReference>
<dbReference type="GO" id="GO:0005886">
    <property type="term" value="C:plasma membrane"/>
    <property type="evidence" value="ECO:0007669"/>
    <property type="project" value="UniProtKB-SubCell"/>
</dbReference>
<dbReference type="GO" id="GO:0045259">
    <property type="term" value="C:proton-transporting ATP synthase complex"/>
    <property type="evidence" value="ECO:0007669"/>
    <property type="project" value="UniProtKB-KW"/>
</dbReference>
<dbReference type="GO" id="GO:0043531">
    <property type="term" value="F:ADP binding"/>
    <property type="evidence" value="ECO:0007669"/>
    <property type="project" value="TreeGrafter"/>
</dbReference>
<dbReference type="GO" id="GO:0005524">
    <property type="term" value="F:ATP binding"/>
    <property type="evidence" value="ECO:0007669"/>
    <property type="project" value="UniProtKB-UniRule"/>
</dbReference>
<dbReference type="GO" id="GO:0046933">
    <property type="term" value="F:proton-transporting ATP synthase activity, rotational mechanism"/>
    <property type="evidence" value="ECO:0007669"/>
    <property type="project" value="UniProtKB-UniRule"/>
</dbReference>
<dbReference type="CDD" id="cd18113">
    <property type="entry name" value="ATP-synt_F1_alpha_C"/>
    <property type="match status" value="1"/>
</dbReference>
<dbReference type="CDD" id="cd18116">
    <property type="entry name" value="ATP-synt_F1_alpha_N"/>
    <property type="match status" value="1"/>
</dbReference>
<dbReference type="CDD" id="cd01132">
    <property type="entry name" value="F1-ATPase_alpha_CD"/>
    <property type="match status" value="1"/>
</dbReference>
<dbReference type="FunFam" id="1.20.150.20:FF:000001">
    <property type="entry name" value="ATP synthase subunit alpha"/>
    <property type="match status" value="1"/>
</dbReference>
<dbReference type="FunFam" id="2.40.30.20:FF:000001">
    <property type="entry name" value="ATP synthase subunit alpha"/>
    <property type="match status" value="1"/>
</dbReference>
<dbReference type="FunFam" id="3.40.50.300:FF:000002">
    <property type="entry name" value="ATP synthase subunit alpha"/>
    <property type="match status" value="1"/>
</dbReference>
<dbReference type="Gene3D" id="2.40.30.20">
    <property type="match status" value="1"/>
</dbReference>
<dbReference type="Gene3D" id="1.20.150.20">
    <property type="entry name" value="ATP synthase alpha/beta chain, C-terminal domain"/>
    <property type="match status" value="1"/>
</dbReference>
<dbReference type="Gene3D" id="3.40.50.300">
    <property type="entry name" value="P-loop containing nucleotide triphosphate hydrolases"/>
    <property type="match status" value="1"/>
</dbReference>
<dbReference type="HAMAP" id="MF_01346">
    <property type="entry name" value="ATP_synth_alpha_bact"/>
    <property type="match status" value="1"/>
</dbReference>
<dbReference type="InterPro" id="IPR023366">
    <property type="entry name" value="ATP_synth_asu-like_sf"/>
</dbReference>
<dbReference type="InterPro" id="IPR000793">
    <property type="entry name" value="ATP_synth_asu_C"/>
</dbReference>
<dbReference type="InterPro" id="IPR038376">
    <property type="entry name" value="ATP_synth_asu_C_sf"/>
</dbReference>
<dbReference type="InterPro" id="IPR033732">
    <property type="entry name" value="ATP_synth_F1_a_nt-bd_dom"/>
</dbReference>
<dbReference type="InterPro" id="IPR005294">
    <property type="entry name" value="ATP_synth_F1_asu"/>
</dbReference>
<dbReference type="InterPro" id="IPR020003">
    <property type="entry name" value="ATPase_a/bsu_AS"/>
</dbReference>
<dbReference type="InterPro" id="IPR004100">
    <property type="entry name" value="ATPase_F1/V1/A1_a/bsu_N"/>
</dbReference>
<dbReference type="InterPro" id="IPR036121">
    <property type="entry name" value="ATPase_F1/V1/A1_a/bsu_N_sf"/>
</dbReference>
<dbReference type="InterPro" id="IPR000194">
    <property type="entry name" value="ATPase_F1/V1/A1_a/bsu_nucl-bd"/>
</dbReference>
<dbReference type="InterPro" id="IPR027417">
    <property type="entry name" value="P-loop_NTPase"/>
</dbReference>
<dbReference type="NCBIfam" id="TIGR00962">
    <property type="entry name" value="atpA"/>
    <property type="match status" value="1"/>
</dbReference>
<dbReference type="NCBIfam" id="NF009884">
    <property type="entry name" value="PRK13343.1"/>
    <property type="match status" value="1"/>
</dbReference>
<dbReference type="PANTHER" id="PTHR48082">
    <property type="entry name" value="ATP SYNTHASE SUBUNIT ALPHA, MITOCHONDRIAL"/>
    <property type="match status" value="1"/>
</dbReference>
<dbReference type="PANTHER" id="PTHR48082:SF2">
    <property type="entry name" value="ATP SYNTHASE SUBUNIT ALPHA, MITOCHONDRIAL"/>
    <property type="match status" value="1"/>
</dbReference>
<dbReference type="Pfam" id="PF00006">
    <property type="entry name" value="ATP-synt_ab"/>
    <property type="match status" value="1"/>
</dbReference>
<dbReference type="Pfam" id="PF00306">
    <property type="entry name" value="ATP-synt_ab_C"/>
    <property type="match status" value="1"/>
</dbReference>
<dbReference type="Pfam" id="PF02874">
    <property type="entry name" value="ATP-synt_ab_N"/>
    <property type="match status" value="1"/>
</dbReference>
<dbReference type="PIRSF" id="PIRSF039088">
    <property type="entry name" value="F_ATPase_subunit_alpha"/>
    <property type="match status" value="1"/>
</dbReference>
<dbReference type="SUPFAM" id="SSF47917">
    <property type="entry name" value="C-terminal domain of alpha and beta subunits of F1 ATP synthase"/>
    <property type="match status" value="1"/>
</dbReference>
<dbReference type="SUPFAM" id="SSF50615">
    <property type="entry name" value="N-terminal domain of alpha and beta subunits of F1 ATP synthase"/>
    <property type="match status" value="1"/>
</dbReference>
<dbReference type="SUPFAM" id="SSF52540">
    <property type="entry name" value="P-loop containing nucleoside triphosphate hydrolases"/>
    <property type="match status" value="1"/>
</dbReference>
<dbReference type="PROSITE" id="PS00152">
    <property type="entry name" value="ATPASE_ALPHA_BETA"/>
    <property type="match status" value="1"/>
</dbReference>
<organism>
    <name type="scientific">Lactobacillus gasseri (strain ATCC 33323 / DSM 20243 / BCRC 14619 / CIP 102991 / JCM 1131 / KCTC 3163 / NCIMB 11718 / NCTC 13722 / AM63)</name>
    <dbReference type="NCBI Taxonomy" id="324831"/>
    <lineage>
        <taxon>Bacteria</taxon>
        <taxon>Bacillati</taxon>
        <taxon>Bacillota</taxon>
        <taxon>Bacilli</taxon>
        <taxon>Lactobacillales</taxon>
        <taxon>Lactobacillaceae</taxon>
        <taxon>Lactobacillus</taxon>
    </lineage>
</organism>
<name>ATPA_LACGA</name>
<accession>Q042L3</accession>
<reference key="1">
    <citation type="journal article" date="2006" name="Proc. Natl. Acad. Sci. U.S.A.">
        <title>Comparative genomics of the lactic acid bacteria.</title>
        <authorList>
            <person name="Makarova K.S."/>
            <person name="Slesarev A."/>
            <person name="Wolf Y.I."/>
            <person name="Sorokin A."/>
            <person name="Mirkin B."/>
            <person name="Koonin E.V."/>
            <person name="Pavlov A."/>
            <person name="Pavlova N."/>
            <person name="Karamychev V."/>
            <person name="Polouchine N."/>
            <person name="Shakhova V."/>
            <person name="Grigoriev I."/>
            <person name="Lou Y."/>
            <person name="Rohksar D."/>
            <person name="Lucas S."/>
            <person name="Huang K."/>
            <person name="Goodstein D.M."/>
            <person name="Hawkins T."/>
            <person name="Plengvidhya V."/>
            <person name="Welker D."/>
            <person name="Hughes J."/>
            <person name="Goh Y."/>
            <person name="Benson A."/>
            <person name="Baldwin K."/>
            <person name="Lee J.-H."/>
            <person name="Diaz-Muniz I."/>
            <person name="Dosti B."/>
            <person name="Smeianov V."/>
            <person name="Wechter W."/>
            <person name="Barabote R."/>
            <person name="Lorca G."/>
            <person name="Altermann E."/>
            <person name="Barrangou R."/>
            <person name="Ganesan B."/>
            <person name="Xie Y."/>
            <person name="Rawsthorne H."/>
            <person name="Tamir D."/>
            <person name="Parker C."/>
            <person name="Breidt F."/>
            <person name="Broadbent J.R."/>
            <person name="Hutkins R."/>
            <person name="O'Sullivan D."/>
            <person name="Steele J."/>
            <person name="Unlu G."/>
            <person name="Saier M.H. Jr."/>
            <person name="Klaenhammer T."/>
            <person name="Richardson P."/>
            <person name="Kozyavkin S."/>
            <person name="Weimer B.C."/>
            <person name="Mills D.A."/>
        </authorList>
    </citation>
    <scope>NUCLEOTIDE SEQUENCE [LARGE SCALE GENOMIC DNA]</scope>
    <source>
        <strain>ATCC 33323 / DSM 20243 / BCRC 14619 / CIP 102991 / JCM 1131 / KCTC 3163 / NCIMB 11718 / NCTC 13722 / AM63</strain>
    </source>
</reference>
<evidence type="ECO:0000255" key="1">
    <source>
        <dbReference type="HAMAP-Rule" id="MF_01346"/>
    </source>
</evidence>
<proteinExistence type="inferred from homology"/>
<gene>
    <name evidence="1" type="primary">atpA</name>
    <name type="ordered locus">LGAS_1240</name>
</gene>
<protein>
    <recommendedName>
        <fullName evidence="1">ATP synthase subunit alpha</fullName>
        <ecNumber evidence="1">7.1.2.2</ecNumber>
    </recommendedName>
    <alternativeName>
        <fullName evidence="1">ATP synthase F1 sector subunit alpha</fullName>
    </alternativeName>
    <alternativeName>
        <fullName evidence="1">F-ATPase subunit alpha</fullName>
    </alternativeName>
</protein>
<sequence length="506" mass="55432">MKPLSIKAEEISALIKQQLEKYDDKLNVNEVGTVTYVGDGIARAHGLNNVLSSELLQFSNGSYGIAQNLEANDVGIIILGRFDDIREGDQVKRTGRIMEVPVGDQLIGRVVNPLGQPVDGLGEIKTDKTRPIESKAPGVMDRQSVNQPLQTGIKAIDALVPIGRGQRELIIGDRKTGKTALALDTIINQKGQDVICIYVAIGQKESTVKNSVETLKRFGAMDYTIVVEAGPSEPAPMLYIAPYAGTAMGEEFMYNGKDVLIVFDDLSKQAVAYREISLLLRRPPGREAYPGDVFYLHSRLLERSAKLNKKLGGGSMTALPFIQTQAGDISAYIPTNVISITDGQIFLEADLFFAGTRPAINAGESVSRVGGSAQIKAMKKVAGTLRVDLASYRELESFAQFGSDLDQATQAKLNRGRRTVEVLKQPLHKPLPVEDEVLILYALTHGFLDAIPVPDIQRYELELYDYFASNYNDLLDVIRTTGDLPEEAKLNEALKNFNEGFSISKK</sequence>
<comment type="function">
    <text evidence="1">Produces ATP from ADP in the presence of a proton gradient across the membrane. The alpha chain is a regulatory subunit.</text>
</comment>
<comment type="catalytic activity">
    <reaction evidence="1">
        <text>ATP + H2O + 4 H(+)(in) = ADP + phosphate + 5 H(+)(out)</text>
        <dbReference type="Rhea" id="RHEA:57720"/>
        <dbReference type="ChEBI" id="CHEBI:15377"/>
        <dbReference type="ChEBI" id="CHEBI:15378"/>
        <dbReference type="ChEBI" id="CHEBI:30616"/>
        <dbReference type="ChEBI" id="CHEBI:43474"/>
        <dbReference type="ChEBI" id="CHEBI:456216"/>
        <dbReference type="EC" id="7.1.2.2"/>
    </reaction>
</comment>
<comment type="subunit">
    <text evidence="1">F-type ATPases have 2 components, CF(1) - the catalytic core - and CF(0) - the membrane proton channel. CF(1) has five subunits: alpha(3), beta(3), gamma(1), delta(1), epsilon(1). CF(0) has three main subunits: a(1), b(2) and c(9-12). The alpha and beta chains form an alternating ring which encloses part of the gamma chain. CF(1) is attached to CF(0) by a central stalk formed by the gamma and epsilon chains, while a peripheral stalk is formed by the delta and b chains.</text>
</comment>
<comment type="subcellular location">
    <subcellularLocation>
        <location evidence="1">Cell membrane</location>
        <topology evidence="1">Peripheral membrane protein</topology>
    </subcellularLocation>
</comment>
<comment type="similarity">
    <text evidence="1">Belongs to the ATPase alpha/beta chains family.</text>
</comment>